<accession>P38805</accession>
<accession>D3DL40</accession>
<protein>
    <recommendedName>
        <fullName>Ribosome production factor 1</fullName>
    </recommendedName>
    <alternativeName>
        <fullName>Ribosome biogenesis protein RPF1</fullName>
    </alternativeName>
</protein>
<dbReference type="EMBL" id="U00060">
    <property type="protein sequence ID" value="AAB68926.1"/>
    <property type="molecule type" value="Genomic_DNA"/>
</dbReference>
<dbReference type="EMBL" id="BK006934">
    <property type="protein sequence ID" value="DAA06784.1"/>
    <property type="molecule type" value="Genomic_DNA"/>
</dbReference>
<dbReference type="PIR" id="S46718">
    <property type="entry name" value="S46718"/>
</dbReference>
<dbReference type="RefSeq" id="NP_011956.1">
    <property type="nucleotide sequence ID" value="NM_001179218.1"/>
</dbReference>
<dbReference type="PDB" id="5Z3G">
    <property type="method" value="EM"/>
    <property type="resolution" value="3.65 A"/>
    <property type="chains" value="O=1-295"/>
</dbReference>
<dbReference type="PDB" id="6C0F">
    <property type="method" value="EM"/>
    <property type="resolution" value="3.70 A"/>
    <property type="chains" value="I=1-295"/>
</dbReference>
<dbReference type="PDB" id="6CB1">
    <property type="method" value="EM"/>
    <property type="resolution" value="4.60 A"/>
    <property type="chains" value="I=1-295"/>
</dbReference>
<dbReference type="PDB" id="6EM1">
    <property type="method" value="EM"/>
    <property type="resolution" value="3.60 A"/>
    <property type="chains" value="x=1-295"/>
</dbReference>
<dbReference type="PDB" id="6EM3">
    <property type="method" value="EM"/>
    <property type="resolution" value="3.20 A"/>
    <property type="chains" value="x=1-295"/>
</dbReference>
<dbReference type="PDB" id="6EM4">
    <property type="method" value="EM"/>
    <property type="resolution" value="4.10 A"/>
    <property type="chains" value="x=1-295"/>
</dbReference>
<dbReference type="PDB" id="6EM5">
    <property type="method" value="EM"/>
    <property type="resolution" value="4.30 A"/>
    <property type="chains" value="x=1-295"/>
</dbReference>
<dbReference type="PDB" id="7OHS">
    <property type="method" value="EM"/>
    <property type="resolution" value="4.38 A"/>
    <property type="chains" value="x=1-295"/>
</dbReference>
<dbReference type="PDB" id="7OHW">
    <property type="method" value="EM"/>
    <property type="resolution" value="3.50 A"/>
    <property type="chains" value="x=1-295"/>
</dbReference>
<dbReference type="PDB" id="7OHX">
    <property type="method" value="EM"/>
    <property type="resolution" value="3.30 A"/>
    <property type="chains" value="x=1-295"/>
</dbReference>
<dbReference type="PDB" id="8V83">
    <property type="method" value="EM"/>
    <property type="resolution" value="2.53 A"/>
    <property type="chains" value="x=1-295"/>
</dbReference>
<dbReference type="PDB" id="8V84">
    <property type="method" value="EM"/>
    <property type="resolution" value="2.70 A"/>
    <property type="chains" value="x=1-295"/>
</dbReference>
<dbReference type="PDBsum" id="5Z3G"/>
<dbReference type="PDBsum" id="6C0F"/>
<dbReference type="PDBsum" id="6CB1"/>
<dbReference type="PDBsum" id="6EM1"/>
<dbReference type="PDBsum" id="6EM3"/>
<dbReference type="PDBsum" id="6EM4"/>
<dbReference type="PDBsum" id="6EM5"/>
<dbReference type="PDBsum" id="7OHS"/>
<dbReference type="PDBsum" id="7OHW"/>
<dbReference type="PDBsum" id="7OHX"/>
<dbReference type="PDBsum" id="8V83"/>
<dbReference type="PDBsum" id="8V84"/>
<dbReference type="EMDB" id="EMD-12907"/>
<dbReference type="EMDB" id="EMD-12911"/>
<dbReference type="EMDB" id="EMD-12912"/>
<dbReference type="EMDB" id="EMD-43017"/>
<dbReference type="EMDB" id="EMD-43021"/>
<dbReference type="EMDB" id="EMD-6878"/>
<dbReference type="EMDB" id="EMD-7324"/>
<dbReference type="EMDB" id="EMD-7445"/>
<dbReference type="SMR" id="P38805"/>
<dbReference type="BioGRID" id="36523">
    <property type="interactions" value="352"/>
</dbReference>
<dbReference type="DIP" id="DIP-6511N"/>
<dbReference type="FunCoup" id="P38805">
    <property type="interactions" value="1104"/>
</dbReference>
<dbReference type="IntAct" id="P38805">
    <property type="interactions" value="67"/>
</dbReference>
<dbReference type="MINT" id="P38805"/>
<dbReference type="STRING" id="4932.YHR088W"/>
<dbReference type="iPTMnet" id="P38805"/>
<dbReference type="PaxDb" id="4932-YHR088W"/>
<dbReference type="PeptideAtlas" id="P38805"/>
<dbReference type="TopDownProteomics" id="P38805"/>
<dbReference type="EnsemblFungi" id="YHR088W_mRNA">
    <property type="protein sequence ID" value="YHR088W"/>
    <property type="gene ID" value="YHR088W"/>
</dbReference>
<dbReference type="GeneID" id="856488"/>
<dbReference type="KEGG" id="sce:YHR088W"/>
<dbReference type="AGR" id="SGD:S000001130"/>
<dbReference type="SGD" id="S000001130">
    <property type="gene designation" value="RPF1"/>
</dbReference>
<dbReference type="VEuPathDB" id="FungiDB:YHR088W"/>
<dbReference type="eggNOG" id="KOG2780">
    <property type="taxonomic scope" value="Eukaryota"/>
</dbReference>
<dbReference type="GeneTree" id="ENSGT00940000153231"/>
<dbReference type="HOGENOM" id="CLU_040063_1_0_1"/>
<dbReference type="InParanoid" id="P38805"/>
<dbReference type="OMA" id="AWIISNK"/>
<dbReference type="OrthoDB" id="264354at2759"/>
<dbReference type="BioCyc" id="YEAST:G3O-31135-MONOMER"/>
<dbReference type="BioGRID-ORCS" id="856488">
    <property type="hits" value="6 hits in 10 CRISPR screens"/>
</dbReference>
<dbReference type="PRO" id="PR:P38805"/>
<dbReference type="Proteomes" id="UP000002311">
    <property type="component" value="Chromosome VIII"/>
</dbReference>
<dbReference type="RNAct" id="P38805">
    <property type="molecule type" value="protein"/>
</dbReference>
<dbReference type="GO" id="GO:0005730">
    <property type="term" value="C:nucleolus"/>
    <property type="evidence" value="ECO:0000314"/>
    <property type="project" value="SGD"/>
</dbReference>
<dbReference type="GO" id="GO:0030687">
    <property type="term" value="C:preribosome, large subunit precursor"/>
    <property type="evidence" value="ECO:0000314"/>
    <property type="project" value="SGD"/>
</dbReference>
<dbReference type="GO" id="GO:0042134">
    <property type="term" value="F:rRNA primary transcript binding"/>
    <property type="evidence" value="ECO:0000314"/>
    <property type="project" value="SGD"/>
</dbReference>
<dbReference type="GO" id="GO:0000460">
    <property type="term" value="P:maturation of 5.8S rRNA"/>
    <property type="evidence" value="ECO:0000318"/>
    <property type="project" value="GO_Central"/>
</dbReference>
<dbReference type="GO" id="GO:0000466">
    <property type="term" value="P:maturation of 5.8S rRNA from tricistronic rRNA transcript (SSU-rRNA, 5.8S rRNA, LSU-rRNA)"/>
    <property type="evidence" value="ECO:0000315"/>
    <property type="project" value="SGD"/>
</dbReference>
<dbReference type="GO" id="GO:0000470">
    <property type="term" value="P:maturation of LSU-rRNA"/>
    <property type="evidence" value="ECO:0000318"/>
    <property type="project" value="GO_Central"/>
</dbReference>
<dbReference type="GO" id="GO:0000463">
    <property type="term" value="P:maturation of LSU-rRNA from tricistronic rRNA transcript (SSU-rRNA, 5.8S rRNA, LSU-rRNA)"/>
    <property type="evidence" value="ECO:0000315"/>
    <property type="project" value="SGD"/>
</dbReference>
<dbReference type="GO" id="GO:0000055">
    <property type="term" value="P:ribosomal large subunit export from nucleus"/>
    <property type="evidence" value="ECO:0000315"/>
    <property type="project" value="SGD"/>
</dbReference>
<dbReference type="FunFam" id="3.40.50.10480:FF:000002">
    <property type="entry name" value="Ribosome production factor 1"/>
    <property type="match status" value="1"/>
</dbReference>
<dbReference type="Gene3D" id="3.40.50.10480">
    <property type="entry name" value="Probable brix-domain ribosomal biogenesis protein"/>
    <property type="match status" value="1"/>
</dbReference>
<dbReference type="InterPro" id="IPR007109">
    <property type="entry name" value="Brix"/>
</dbReference>
<dbReference type="InterPro" id="IPR044281">
    <property type="entry name" value="IMP4/RPF1"/>
</dbReference>
<dbReference type="PANTHER" id="PTHR22734:SF3">
    <property type="entry name" value="RIBOSOME PRODUCTION FACTOR 1"/>
    <property type="match status" value="1"/>
</dbReference>
<dbReference type="PANTHER" id="PTHR22734">
    <property type="entry name" value="U3 SMALL NUCLEOLAR RIBONUCLEOPROTEIN PROTEIN IMP4"/>
    <property type="match status" value="1"/>
</dbReference>
<dbReference type="Pfam" id="PF04427">
    <property type="entry name" value="Brix"/>
    <property type="match status" value="1"/>
</dbReference>
<dbReference type="SMART" id="SM00879">
    <property type="entry name" value="Brix"/>
    <property type="match status" value="1"/>
</dbReference>
<dbReference type="SUPFAM" id="SSF52954">
    <property type="entry name" value="Class II aaRS ABD-related"/>
    <property type="match status" value="1"/>
</dbReference>
<dbReference type="PROSITE" id="PS50833">
    <property type="entry name" value="BRIX"/>
    <property type="match status" value="1"/>
</dbReference>
<name>RPF1_YEAST</name>
<reference key="1">
    <citation type="journal article" date="1994" name="Science">
        <title>Complete nucleotide sequence of Saccharomyces cerevisiae chromosome VIII.</title>
        <authorList>
            <person name="Johnston M."/>
            <person name="Andrews S."/>
            <person name="Brinkman R."/>
            <person name="Cooper J."/>
            <person name="Ding H."/>
            <person name="Dover J."/>
            <person name="Du Z."/>
            <person name="Favello A."/>
            <person name="Fulton L."/>
            <person name="Gattung S."/>
            <person name="Geisel C."/>
            <person name="Kirsten J."/>
            <person name="Kucaba T."/>
            <person name="Hillier L.W."/>
            <person name="Jier M."/>
            <person name="Johnston L."/>
            <person name="Langston Y."/>
            <person name="Latreille P."/>
            <person name="Louis E.J."/>
            <person name="Macri C."/>
            <person name="Mardis E."/>
            <person name="Menezes S."/>
            <person name="Mouser L."/>
            <person name="Nhan M."/>
            <person name="Rifkin L."/>
            <person name="Riles L."/>
            <person name="St Peter H."/>
            <person name="Trevaskis E."/>
            <person name="Vaughan K."/>
            <person name="Vignati D."/>
            <person name="Wilcox L."/>
            <person name="Wohldman P."/>
            <person name="Waterston R."/>
            <person name="Wilson R."/>
            <person name="Vaudin M."/>
        </authorList>
    </citation>
    <scope>NUCLEOTIDE SEQUENCE [LARGE SCALE GENOMIC DNA]</scope>
    <source>
        <strain>ATCC 204508 / S288c</strain>
    </source>
</reference>
<reference key="2">
    <citation type="journal article" date="2014" name="G3 (Bethesda)">
        <title>The reference genome sequence of Saccharomyces cerevisiae: Then and now.</title>
        <authorList>
            <person name="Engel S.R."/>
            <person name="Dietrich F.S."/>
            <person name="Fisk D.G."/>
            <person name="Binkley G."/>
            <person name="Balakrishnan R."/>
            <person name="Costanzo M.C."/>
            <person name="Dwight S.S."/>
            <person name="Hitz B.C."/>
            <person name="Karra K."/>
            <person name="Nash R.S."/>
            <person name="Weng S."/>
            <person name="Wong E.D."/>
            <person name="Lloyd P."/>
            <person name="Skrzypek M.S."/>
            <person name="Miyasato S.R."/>
            <person name="Simison M."/>
            <person name="Cherry J.M."/>
        </authorList>
    </citation>
    <scope>GENOME REANNOTATION</scope>
    <source>
        <strain>ATCC 204508 / S288c</strain>
    </source>
</reference>
<reference key="3">
    <citation type="journal article" date="2002" name="Mol. Cell">
        <title>The sigma(70)-like motif: a eukaryotic RNA binding domain unique to a superfamily of proteins required for ribosome biogenesis.</title>
        <authorList>
            <person name="Wehner K.A."/>
            <person name="Baserga S.J."/>
        </authorList>
    </citation>
    <scope>FUNCTION</scope>
    <scope>SUBCELLULAR LOCATION</scope>
</reference>
<reference key="4">
    <citation type="journal article" date="2003" name="FEMS Yeast Res.">
        <title>Functional analysis in yeast of the Brix protein superfamily involved in the biogenesis of ribosomes.</title>
        <authorList>
            <person name="Bogengruber E."/>
            <person name="Briza P."/>
            <person name="Doppler E."/>
            <person name="Wimmer H."/>
            <person name="Koller L."/>
            <person name="Fasiolo F."/>
            <person name="Senger B."/>
            <person name="Hegemann J.H."/>
            <person name="Breitenbach M."/>
        </authorList>
    </citation>
    <scope>FUNCTION</scope>
    <scope>SUBCELLULAR LOCATION</scope>
    <scope>POSSIBLE COMPLEX COMPOSITION</scope>
</reference>
<reference key="5">
    <citation type="journal article" date="2003" name="Nature">
        <title>Global analysis of protein expression in yeast.</title>
        <authorList>
            <person name="Ghaemmaghami S."/>
            <person name="Huh W.-K."/>
            <person name="Bower K."/>
            <person name="Howson R.W."/>
            <person name="Belle A."/>
            <person name="Dephoure N."/>
            <person name="O'Shea E.K."/>
            <person name="Weissman J.S."/>
        </authorList>
    </citation>
    <scope>LEVEL OF PROTEIN EXPRESSION [LARGE SCALE ANALYSIS]</scope>
</reference>
<reference key="6">
    <citation type="journal article" date="2012" name="Proc. Natl. Acad. Sci. U.S.A.">
        <title>N-terminal acetylome analyses and functional insights of the N-terminal acetyltransferase NatB.</title>
        <authorList>
            <person name="Van Damme P."/>
            <person name="Lasa M."/>
            <person name="Polevoda B."/>
            <person name="Gazquez C."/>
            <person name="Elosegui-Artola A."/>
            <person name="Kim D.S."/>
            <person name="De Juan-Pardo E."/>
            <person name="Demeyer K."/>
            <person name="Hole K."/>
            <person name="Larrea E."/>
            <person name="Timmerman E."/>
            <person name="Prieto J."/>
            <person name="Arnesen T."/>
            <person name="Sherman F."/>
            <person name="Gevaert K."/>
            <person name="Aldabe R."/>
        </authorList>
    </citation>
    <scope>IDENTIFICATION BY MASS SPECTROMETRY [LARGE SCALE ANALYSIS]</scope>
</reference>
<sequence length="295" mass="35121">MALGNEINITNKLKRQEIFADIKHEKNKERHTMRRKRAKEERENPELREQRLKENVTQTIENTRVYDETINKEVEGDEDDLMRYFNSNSNEPPKIFLTTNVNAKKSAYEFANILIEILPNVTFVKRKFGYKLKEISDICIKRNFTDIVIINEDKKKVTGLTFIHLPEGPTFYFKLSSFVEVKKIVGHGRPTSHIPELILNNFQTRLGQTVGRLFQSILPQNPDIEGRQVITLHNQRDYIFFRRHRYVFKDNERVGLQELGPQFTLKLKRLQRGIKEETEWEHKPEMDKEKKKFYL</sequence>
<keyword id="KW-0002">3D-structure</keyword>
<keyword id="KW-0539">Nucleus</keyword>
<keyword id="KW-1185">Reference proteome</keyword>
<keyword id="KW-0690">Ribosome biogenesis</keyword>
<keyword id="KW-0694">RNA-binding</keyword>
<keyword id="KW-0698">rRNA processing</keyword>
<keyword id="KW-0699">rRNA-binding</keyword>
<evidence type="ECO:0000255" key="1">
    <source>
        <dbReference type="PROSITE-ProRule" id="PRU00034"/>
    </source>
</evidence>
<evidence type="ECO:0000256" key="2">
    <source>
        <dbReference type="SAM" id="MobiDB-lite"/>
    </source>
</evidence>
<evidence type="ECO:0000269" key="3">
    <source>
    </source>
</evidence>
<evidence type="ECO:0000269" key="4">
    <source>
    </source>
</evidence>
<evidence type="ECO:0000269" key="5">
    <source>
    </source>
</evidence>
<evidence type="ECO:0007829" key="6">
    <source>
        <dbReference type="PDB" id="6EM3"/>
    </source>
</evidence>
<organism>
    <name type="scientific">Saccharomyces cerevisiae (strain ATCC 204508 / S288c)</name>
    <name type="common">Baker's yeast</name>
    <dbReference type="NCBI Taxonomy" id="559292"/>
    <lineage>
        <taxon>Eukaryota</taxon>
        <taxon>Fungi</taxon>
        <taxon>Dikarya</taxon>
        <taxon>Ascomycota</taxon>
        <taxon>Saccharomycotina</taxon>
        <taxon>Saccharomycetes</taxon>
        <taxon>Saccharomycetales</taxon>
        <taxon>Saccharomycetaceae</taxon>
        <taxon>Saccharomyces</taxon>
    </lineage>
</organism>
<feature type="chain" id="PRO_0000120255" description="Ribosome production factor 1">
    <location>
        <begin position="1"/>
        <end position="295"/>
    </location>
</feature>
<feature type="domain" description="Brix" evidence="1">
    <location>
        <begin position="93"/>
        <end position="276"/>
    </location>
</feature>
<feature type="region of interest" description="Disordered" evidence="2">
    <location>
        <begin position="24"/>
        <end position="47"/>
    </location>
</feature>
<feature type="region of interest" description="RNA-binding">
    <location>
        <begin position="254"/>
        <end position="271"/>
    </location>
</feature>
<feature type="compositionally biased region" description="Basic and acidic residues" evidence="2">
    <location>
        <begin position="38"/>
        <end position="47"/>
    </location>
</feature>
<feature type="helix" evidence="6">
    <location>
        <begin position="12"/>
        <end position="43"/>
    </location>
</feature>
<feature type="helix" evidence="6">
    <location>
        <begin position="46"/>
        <end position="54"/>
    </location>
</feature>
<feature type="turn" evidence="6">
    <location>
        <begin position="60"/>
        <end position="63"/>
    </location>
</feature>
<feature type="helix" evidence="6">
    <location>
        <begin position="79"/>
        <end position="84"/>
    </location>
</feature>
<feature type="strand" evidence="6">
    <location>
        <begin position="94"/>
        <end position="99"/>
    </location>
</feature>
<feature type="helix" evidence="6">
    <location>
        <begin position="105"/>
        <end position="117"/>
    </location>
</feature>
<feature type="strand" evidence="6">
    <location>
        <begin position="118"/>
        <end position="124"/>
    </location>
</feature>
<feature type="helix" evidence="6">
    <location>
        <begin position="133"/>
        <end position="141"/>
    </location>
</feature>
<feature type="strand" evidence="6">
    <location>
        <begin position="145"/>
        <end position="167"/>
    </location>
</feature>
<feature type="strand" evidence="6">
    <location>
        <begin position="170"/>
        <end position="174"/>
    </location>
</feature>
<feature type="helix" evidence="6">
    <location>
        <begin position="205"/>
        <end position="217"/>
    </location>
</feature>
<feature type="strand" evidence="6">
    <location>
        <begin position="228"/>
        <end position="230"/>
    </location>
</feature>
<feature type="strand" evidence="6">
    <location>
        <begin position="235"/>
        <end position="240"/>
    </location>
</feature>
<feature type="strand" evidence="6">
    <location>
        <begin position="243"/>
        <end position="249"/>
    </location>
</feature>
<feature type="turn" evidence="6">
    <location>
        <begin position="250"/>
        <end position="252"/>
    </location>
</feature>
<feature type="strand" evidence="6">
    <location>
        <begin position="253"/>
        <end position="260"/>
    </location>
</feature>
<feature type="strand" evidence="6">
    <location>
        <begin position="265"/>
        <end position="268"/>
    </location>
</feature>
<feature type="strand" evidence="6">
    <location>
        <begin position="272"/>
        <end position="276"/>
    </location>
</feature>
<feature type="strand" evidence="6">
    <location>
        <begin position="288"/>
        <end position="290"/>
    </location>
</feature>
<gene>
    <name type="primary">RPF1</name>
    <name type="ordered locus">YHR088W</name>
</gene>
<proteinExistence type="evidence at protein level"/>
<comment type="function">
    <text evidence="3 4">Essential protein. Required for biogenesis of the 60S ribosomal subunit.</text>
</comment>
<comment type="subunit">
    <text>Part of a complex that includes BRX1, RPF1, RPF2 and SSF1 or SSF2.</text>
</comment>
<comment type="interaction">
    <interactant intactId="EBI-24614">
        <id>P38805</id>
    </interactant>
    <interactant intactId="EBI-10937">
        <id>P10962</id>
        <label>MAK16</label>
    </interactant>
    <organismsDiffer>false</organismsDiffer>
    <experiments>4</experiments>
</comment>
<comment type="interaction">
    <interactant intactId="EBI-24614">
        <id>P38805</id>
    </interactant>
    <interactant intactId="EBI-10394">
        <id>P38112</id>
        <label>MAK5</label>
    </interactant>
    <organismsDiffer>false</organismsDiffer>
    <experiments>3</experiments>
</comment>
<comment type="interaction">
    <interactant intactId="EBI-24614">
        <id>P38805</id>
    </interactant>
    <interactant intactId="EBI-29259">
        <id>P39744</id>
        <label>NOC2</label>
    </interactant>
    <organismsDiffer>false</organismsDiffer>
    <experiments>4</experiments>
</comment>
<comment type="interaction">
    <interactant intactId="EBI-24614">
        <id>P38805</id>
    </interactant>
    <interactant intactId="EBI-17814">
        <id>P25582</id>
        <label>SPB1</label>
    </interactant>
    <organismsDiffer>false</organismsDiffer>
    <experiments>3</experiments>
</comment>
<comment type="subcellular location">
    <subcellularLocation>
        <location evidence="3 4">Nucleus</location>
        <location evidence="3 4">Nucleolus</location>
    </subcellularLocation>
</comment>
<comment type="miscellaneous">
    <text evidence="5">Present with 784 molecules/cell in log phase SD medium.</text>
</comment>